<keyword id="KW-0119">Carbohydrate metabolism</keyword>
<keyword id="KW-0456">Lyase</keyword>
<keyword id="KW-1185">Reference proteome</keyword>
<dbReference type="EC" id="4.2.1.126" evidence="1"/>
<dbReference type="EMBL" id="AE004439">
    <property type="protein sequence ID" value="AAK03660.1"/>
    <property type="molecule type" value="Genomic_DNA"/>
</dbReference>
<dbReference type="RefSeq" id="WP_010907235.1">
    <property type="nucleotide sequence ID" value="NC_002663.1"/>
</dbReference>
<dbReference type="SMR" id="P57951"/>
<dbReference type="STRING" id="272843.PM1576"/>
<dbReference type="EnsemblBacteria" id="AAK03660">
    <property type="protein sequence ID" value="AAK03660"/>
    <property type="gene ID" value="PM1576"/>
</dbReference>
<dbReference type="KEGG" id="pmu:PM1576"/>
<dbReference type="PATRIC" id="fig|272843.6.peg.1594"/>
<dbReference type="HOGENOM" id="CLU_049049_1_1_6"/>
<dbReference type="OrthoDB" id="9813395at2"/>
<dbReference type="UniPathway" id="UPA00342"/>
<dbReference type="UniPathway" id="UPA00343"/>
<dbReference type="UniPathway" id="UPA00544"/>
<dbReference type="Proteomes" id="UP000000809">
    <property type="component" value="Chromosome"/>
</dbReference>
<dbReference type="GO" id="GO:0097367">
    <property type="term" value="F:carbohydrate derivative binding"/>
    <property type="evidence" value="ECO:0007669"/>
    <property type="project" value="InterPro"/>
</dbReference>
<dbReference type="GO" id="GO:0016835">
    <property type="term" value="F:carbon-oxygen lyase activity"/>
    <property type="evidence" value="ECO:0007669"/>
    <property type="project" value="UniProtKB-UniRule"/>
</dbReference>
<dbReference type="GO" id="GO:0016803">
    <property type="term" value="F:ether hydrolase activity"/>
    <property type="evidence" value="ECO:0007669"/>
    <property type="project" value="TreeGrafter"/>
</dbReference>
<dbReference type="GO" id="GO:0097175">
    <property type="term" value="P:1,6-anhydro-N-acetyl-beta-muramic acid catabolic process"/>
    <property type="evidence" value="ECO:0007669"/>
    <property type="project" value="UniProtKB-UniRule"/>
</dbReference>
<dbReference type="GO" id="GO:0046348">
    <property type="term" value="P:amino sugar catabolic process"/>
    <property type="evidence" value="ECO:0007669"/>
    <property type="project" value="InterPro"/>
</dbReference>
<dbReference type="GO" id="GO:0097173">
    <property type="term" value="P:N-acetylmuramic acid catabolic process"/>
    <property type="evidence" value="ECO:0007669"/>
    <property type="project" value="UniProtKB-UniPathway"/>
</dbReference>
<dbReference type="GO" id="GO:0009254">
    <property type="term" value="P:peptidoglycan turnover"/>
    <property type="evidence" value="ECO:0007669"/>
    <property type="project" value="UniProtKB-UniRule"/>
</dbReference>
<dbReference type="CDD" id="cd05007">
    <property type="entry name" value="SIS_Etherase"/>
    <property type="match status" value="1"/>
</dbReference>
<dbReference type="FunFam" id="1.10.8.1080:FF:000001">
    <property type="entry name" value="N-acetylmuramic acid 6-phosphate etherase"/>
    <property type="match status" value="1"/>
</dbReference>
<dbReference type="FunFam" id="3.40.50.10490:FF:000014">
    <property type="entry name" value="N-acetylmuramic acid 6-phosphate etherase"/>
    <property type="match status" value="1"/>
</dbReference>
<dbReference type="Gene3D" id="1.10.8.1080">
    <property type="match status" value="1"/>
</dbReference>
<dbReference type="Gene3D" id="3.40.50.10490">
    <property type="entry name" value="Glucose-6-phosphate isomerase like protein, domain 1"/>
    <property type="match status" value="1"/>
</dbReference>
<dbReference type="HAMAP" id="MF_00068">
    <property type="entry name" value="MurQ"/>
    <property type="match status" value="1"/>
</dbReference>
<dbReference type="InterPro" id="IPR005488">
    <property type="entry name" value="Etherase_MurQ"/>
</dbReference>
<dbReference type="InterPro" id="IPR005486">
    <property type="entry name" value="Glucokinase_regulatory_CS"/>
</dbReference>
<dbReference type="InterPro" id="IPR040190">
    <property type="entry name" value="MURQ/GCKR"/>
</dbReference>
<dbReference type="InterPro" id="IPR001347">
    <property type="entry name" value="SIS_dom"/>
</dbReference>
<dbReference type="InterPro" id="IPR046348">
    <property type="entry name" value="SIS_dom_sf"/>
</dbReference>
<dbReference type="NCBIfam" id="TIGR00274">
    <property type="entry name" value="N-acetylmuramic acid 6-phosphate etherase"/>
    <property type="match status" value="1"/>
</dbReference>
<dbReference type="NCBIfam" id="NF003915">
    <property type="entry name" value="PRK05441.1"/>
    <property type="match status" value="1"/>
</dbReference>
<dbReference type="NCBIfam" id="NF009222">
    <property type="entry name" value="PRK12570.1"/>
    <property type="match status" value="1"/>
</dbReference>
<dbReference type="PANTHER" id="PTHR10088">
    <property type="entry name" value="GLUCOKINASE REGULATORY PROTEIN"/>
    <property type="match status" value="1"/>
</dbReference>
<dbReference type="PANTHER" id="PTHR10088:SF4">
    <property type="entry name" value="GLUCOKINASE REGULATORY PROTEIN"/>
    <property type="match status" value="1"/>
</dbReference>
<dbReference type="Pfam" id="PF20741">
    <property type="entry name" value="GKRP-like_C"/>
    <property type="match status" value="1"/>
</dbReference>
<dbReference type="Pfam" id="PF22645">
    <property type="entry name" value="GKRP_SIS_N"/>
    <property type="match status" value="1"/>
</dbReference>
<dbReference type="SUPFAM" id="SSF53697">
    <property type="entry name" value="SIS domain"/>
    <property type="match status" value="1"/>
</dbReference>
<dbReference type="PROSITE" id="PS01272">
    <property type="entry name" value="GCKR"/>
    <property type="match status" value="1"/>
</dbReference>
<dbReference type="PROSITE" id="PS51464">
    <property type="entry name" value="SIS"/>
    <property type="match status" value="1"/>
</dbReference>
<comment type="function">
    <text evidence="1">Specifically catalyzes the cleavage of the D-lactyl ether substituent of MurNAc 6-phosphate, producing GlcNAc 6-phosphate and D-lactate. Together with AnmK, is also required for the utilization of anhydro-N-acetylmuramic acid (anhMurNAc) either imported from the medium or derived from its own cell wall murein, and thus plays a role in cell wall recycling.</text>
</comment>
<comment type="catalytic activity">
    <reaction evidence="1">
        <text>N-acetyl-D-muramate 6-phosphate + H2O = N-acetyl-D-glucosamine 6-phosphate + (R)-lactate</text>
        <dbReference type="Rhea" id="RHEA:26410"/>
        <dbReference type="ChEBI" id="CHEBI:15377"/>
        <dbReference type="ChEBI" id="CHEBI:16004"/>
        <dbReference type="ChEBI" id="CHEBI:57513"/>
        <dbReference type="ChEBI" id="CHEBI:58722"/>
        <dbReference type="EC" id="4.2.1.126"/>
    </reaction>
</comment>
<comment type="pathway">
    <text evidence="1">Amino-sugar metabolism; 1,6-anhydro-N-acetylmuramate degradation.</text>
</comment>
<comment type="pathway">
    <text evidence="1">Amino-sugar metabolism; N-acetylmuramate degradation.</text>
</comment>
<comment type="pathway">
    <text evidence="1">Cell wall biogenesis; peptidoglycan recycling.</text>
</comment>
<comment type="subunit">
    <text evidence="1">Homodimer.</text>
</comment>
<comment type="miscellaneous">
    <text evidence="1">A lyase-type mechanism (elimination/hydration) is suggested for the cleavage of the lactyl ether bond of MurNAc 6-phosphate, with the formation of an alpha,beta-unsaturated aldehyde intermediate with (E)-stereochemistry, followed by the syn addition of water to give product.</text>
</comment>
<comment type="similarity">
    <text evidence="1">Belongs to the GCKR-like family. MurNAc-6-P etherase subfamily.</text>
</comment>
<proteinExistence type="inferred from homology"/>
<sequence length="301" mass="31911">MPNAIHALVTESRNPFSTHIDQLSTLDMLAVINQEDQKVPFAIENVLPEIAQAVDAIAETFMKNGRLIYLGAGTSGRLGILDASECPPTFGTPHEQVVGLIAGGQQAILKAVENAEDDRSAGEQDLRNLALNEKDVVVGIAASGRTPYVLAGIEYANHVGCVTVGISCNPDSALAALANIAITPIVGPEVITGSSRMKAGTAQKLILNMLTTGAMIKTGKVFGNLMVDVVATNEKLVERQKNIVMEVTQCDRQQAEQALLQSNGQCKVAIVMLLLNMSAEEAKNCLAQANGFIHQALTLVK</sequence>
<protein>
    <recommendedName>
        <fullName evidence="1">N-acetylmuramic acid 6-phosphate etherase</fullName>
        <shortName evidence="1">MurNAc-6-P etherase</shortName>
        <ecNumber evidence="1">4.2.1.126</ecNumber>
    </recommendedName>
    <alternativeName>
        <fullName evidence="1">N-acetylmuramic acid 6-phosphate hydrolase</fullName>
    </alternativeName>
    <alternativeName>
        <fullName evidence="1">N-acetylmuramic acid 6-phosphate lyase</fullName>
    </alternativeName>
</protein>
<organism>
    <name type="scientific">Pasteurella multocida (strain Pm70)</name>
    <dbReference type="NCBI Taxonomy" id="272843"/>
    <lineage>
        <taxon>Bacteria</taxon>
        <taxon>Pseudomonadati</taxon>
        <taxon>Pseudomonadota</taxon>
        <taxon>Gammaproteobacteria</taxon>
        <taxon>Pasteurellales</taxon>
        <taxon>Pasteurellaceae</taxon>
        <taxon>Pasteurella</taxon>
    </lineage>
</organism>
<feature type="chain" id="PRO_0000214837" description="N-acetylmuramic acid 6-phosphate etherase">
    <location>
        <begin position="1"/>
        <end position="301"/>
    </location>
</feature>
<feature type="domain" description="SIS" evidence="1">
    <location>
        <begin position="57"/>
        <end position="220"/>
    </location>
</feature>
<feature type="active site" description="Proton donor" evidence="1">
    <location>
        <position position="85"/>
    </location>
</feature>
<feature type="active site" evidence="1">
    <location>
        <position position="116"/>
    </location>
</feature>
<evidence type="ECO:0000255" key="1">
    <source>
        <dbReference type="HAMAP-Rule" id="MF_00068"/>
    </source>
</evidence>
<gene>
    <name evidence="1" type="primary">murQ</name>
    <name type="ordered locus">PM1576</name>
</gene>
<accession>P57951</accession>
<name>MURQ_PASMU</name>
<reference key="1">
    <citation type="journal article" date="2001" name="Proc. Natl. Acad. Sci. U.S.A.">
        <title>Complete genomic sequence of Pasteurella multocida Pm70.</title>
        <authorList>
            <person name="May B.J."/>
            <person name="Zhang Q."/>
            <person name="Li L.L."/>
            <person name="Paustian M.L."/>
            <person name="Whittam T.S."/>
            <person name="Kapur V."/>
        </authorList>
    </citation>
    <scope>NUCLEOTIDE SEQUENCE [LARGE SCALE GENOMIC DNA]</scope>
    <source>
        <strain>Pm70</strain>
    </source>
</reference>